<reference key="1">
    <citation type="submission" date="2008-10" db="EMBL/GenBank/DDBJ databases">
        <title>Complete sequence of Desulfovibrio vulgaris str. 'Miyazaki F'.</title>
        <authorList>
            <person name="Lucas S."/>
            <person name="Copeland A."/>
            <person name="Lapidus A."/>
            <person name="Glavina del Rio T."/>
            <person name="Dalin E."/>
            <person name="Tice H."/>
            <person name="Bruce D."/>
            <person name="Goodwin L."/>
            <person name="Pitluck S."/>
            <person name="Sims D."/>
            <person name="Brettin T."/>
            <person name="Detter J.C."/>
            <person name="Han C."/>
            <person name="Larimer F."/>
            <person name="Land M."/>
            <person name="Hauser L."/>
            <person name="Kyrpides N."/>
            <person name="Mikhailova N."/>
            <person name="Hazen T.C."/>
            <person name="Richardson P."/>
        </authorList>
    </citation>
    <scope>NUCLEOTIDE SEQUENCE [LARGE SCALE GENOMIC DNA]</scope>
    <source>
        <strain>DSM 19637 / Miyazaki F</strain>
    </source>
</reference>
<sequence>MSEELMNRKGRVLTGIVVSDKNDKTIVVRVETLVQHPLLKKYVRRRNKFTAHDPQNECGIGDKVKIIEYRPLSRNKRWHLVSILEKAV</sequence>
<dbReference type="EMBL" id="CP001197">
    <property type="protein sequence ID" value="ACL07049.1"/>
    <property type="molecule type" value="Genomic_DNA"/>
</dbReference>
<dbReference type="SMR" id="B8DNA5"/>
<dbReference type="STRING" id="883.DvMF_0088"/>
<dbReference type="KEGG" id="dvm:DvMF_0088"/>
<dbReference type="eggNOG" id="COG0186">
    <property type="taxonomic scope" value="Bacteria"/>
</dbReference>
<dbReference type="HOGENOM" id="CLU_073626_1_1_7"/>
<dbReference type="OrthoDB" id="9811714at2"/>
<dbReference type="GO" id="GO:0022627">
    <property type="term" value="C:cytosolic small ribosomal subunit"/>
    <property type="evidence" value="ECO:0007669"/>
    <property type="project" value="TreeGrafter"/>
</dbReference>
<dbReference type="GO" id="GO:0019843">
    <property type="term" value="F:rRNA binding"/>
    <property type="evidence" value="ECO:0007669"/>
    <property type="project" value="UniProtKB-UniRule"/>
</dbReference>
<dbReference type="GO" id="GO:0003735">
    <property type="term" value="F:structural constituent of ribosome"/>
    <property type="evidence" value="ECO:0007669"/>
    <property type="project" value="InterPro"/>
</dbReference>
<dbReference type="GO" id="GO:0006412">
    <property type="term" value="P:translation"/>
    <property type="evidence" value="ECO:0007669"/>
    <property type="project" value="UniProtKB-UniRule"/>
</dbReference>
<dbReference type="CDD" id="cd00364">
    <property type="entry name" value="Ribosomal_uS17"/>
    <property type="match status" value="1"/>
</dbReference>
<dbReference type="Gene3D" id="2.40.50.140">
    <property type="entry name" value="Nucleic acid-binding proteins"/>
    <property type="match status" value="1"/>
</dbReference>
<dbReference type="HAMAP" id="MF_01345_B">
    <property type="entry name" value="Ribosomal_uS17_B"/>
    <property type="match status" value="1"/>
</dbReference>
<dbReference type="InterPro" id="IPR012340">
    <property type="entry name" value="NA-bd_OB-fold"/>
</dbReference>
<dbReference type="InterPro" id="IPR000266">
    <property type="entry name" value="Ribosomal_uS17"/>
</dbReference>
<dbReference type="InterPro" id="IPR019984">
    <property type="entry name" value="Ribosomal_uS17_bact/chlr"/>
</dbReference>
<dbReference type="InterPro" id="IPR019979">
    <property type="entry name" value="Ribosomal_uS17_CS"/>
</dbReference>
<dbReference type="NCBIfam" id="NF004123">
    <property type="entry name" value="PRK05610.1"/>
    <property type="match status" value="1"/>
</dbReference>
<dbReference type="NCBIfam" id="TIGR03635">
    <property type="entry name" value="uS17_bact"/>
    <property type="match status" value="1"/>
</dbReference>
<dbReference type="PANTHER" id="PTHR10744">
    <property type="entry name" value="40S RIBOSOMAL PROTEIN S11 FAMILY MEMBER"/>
    <property type="match status" value="1"/>
</dbReference>
<dbReference type="PANTHER" id="PTHR10744:SF1">
    <property type="entry name" value="SMALL RIBOSOMAL SUBUNIT PROTEIN US17M"/>
    <property type="match status" value="1"/>
</dbReference>
<dbReference type="Pfam" id="PF00366">
    <property type="entry name" value="Ribosomal_S17"/>
    <property type="match status" value="1"/>
</dbReference>
<dbReference type="PRINTS" id="PR00973">
    <property type="entry name" value="RIBOSOMALS17"/>
</dbReference>
<dbReference type="SUPFAM" id="SSF50249">
    <property type="entry name" value="Nucleic acid-binding proteins"/>
    <property type="match status" value="1"/>
</dbReference>
<dbReference type="PROSITE" id="PS00056">
    <property type="entry name" value="RIBOSOMAL_S17"/>
    <property type="match status" value="1"/>
</dbReference>
<organism>
    <name type="scientific">Nitratidesulfovibrio vulgaris (strain DSM 19637 / Miyazaki F)</name>
    <name type="common">Desulfovibrio vulgaris</name>
    <dbReference type="NCBI Taxonomy" id="883"/>
    <lineage>
        <taxon>Bacteria</taxon>
        <taxon>Pseudomonadati</taxon>
        <taxon>Thermodesulfobacteriota</taxon>
        <taxon>Desulfovibrionia</taxon>
        <taxon>Desulfovibrionales</taxon>
        <taxon>Desulfovibrionaceae</taxon>
        <taxon>Nitratidesulfovibrio</taxon>
    </lineage>
</organism>
<keyword id="KW-0687">Ribonucleoprotein</keyword>
<keyword id="KW-0689">Ribosomal protein</keyword>
<keyword id="KW-0694">RNA-binding</keyword>
<keyword id="KW-0699">rRNA-binding</keyword>
<feature type="chain" id="PRO_1000143248" description="Small ribosomal subunit protein uS17">
    <location>
        <begin position="1"/>
        <end position="88"/>
    </location>
</feature>
<proteinExistence type="inferred from homology"/>
<evidence type="ECO:0000255" key="1">
    <source>
        <dbReference type="HAMAP-Rule" id="MF_01345"/>
    </source>
</evidence>
<evidence type="ECO:0000305" key="2"/>
<comment type="function">
    <text evidence="1">One of the primary rRNA binding proteins, it binds specifically to the 5'-end of 16S ribosomal RNA.</text>
</comment>
<comment type="subunit">
    <text evidence="1">Part of the 30S ribosomal subunit.</text>
</comment>
<comment type="similarity">
    <text evidence="1">Belongs to the universal ribosomal protein uS17 family.</text>
</comment>
<protein>
    <recommendedName>
        <fullName evidence="1">Small ribosomal subunit protein uS17</fullName>
    </recommendedName>
    <alternativeName>
        <fullName evidence="2">30S ribosomal protein S17</fullName>
    </alternativeName>
</protein>
<gene>
    <name evidence="1" type="primary">rpsQ</name>
    <name type="ordered locus">DvMF_0088</name>
</gene>
<accession>B8DNA5</accession>
<name>RS17_NITV9</name>